<dbReference type="EC" id="3.1.1.96" evidence="1"/>
<dbReference type="EMBL" id="AE017285">
    <property type="protein sequence ID" value="AAS95930.1"/>
    <property type="molecule type" value="Genomic_DNA"/>
</dbReference>
<dbReference type="RefSeq" id="WP_010938745.1">
    <property type="nucleotide sequence ID" value="NC_002937.3"/>
</dbReference>
<dbReference type="RefSeq" id="YP_010671.1">
    <property type="nucleotide sequence ID" value="NC_002937.3"/>
</dbReference>
<dbReference type="SMR" id="Q72C32"/>
<dbReference type="STRING" id="882.DVU_1452"/>
<dbReference type="PaxDb" id="882-DVU_1452"/>
<dbReference type="EnsemblBacteria" id="AAS95930">
    <property type="protein sequence ID" value="AAS95930"/>
    <property type="gene ID" value="DVU_1452"/>
</dbReference>
<dbReference type="KEGG" id="dvu:DVU_1452"/>
<dbReference type="PATRIC" id="fig|882.5.peg.1350"/>
<dbReference type="eggNOG" id="COG1490">
    <property type="taxonomic scope" value="Bacteria"/>
</dbReference>
<dbReference type="HOGENOM" id="CLU_076901_1_0_7"/>
<dbReference type="OrthoDB" id="9801395at2"/>
<dbReference type="PhylomeDB" id="Q72C32"/>
<dbReference type="Proteomes" id="UP000002194">
    <property type="component" value="Chromosome"/>
</dbReference>
<dbReference type="GO" id="GO:0005737">
    <property type="term" value="C:cytoplasm"/>
    <property type="evidence" value="ECO:0007669"/>
    <property type="project" value="UniProtKB-SubCell"/>
</dbReference>
<dbReference type="GO" id="GO:0051500">
    <property type="term" value="F:D-tyrosyl-tRNA(Tyr) deacylase activity"/>
    <property type="evidence" value="ECO:0007669"/>
    <property type="project" value="TreeGrafter"/>
</dbReference>
<dbReference type="GO" id="GO:0106026">
    <property type="term" value="F:Gly-tRNA(Ala) deacylase activity"/>
    <property type="evidence" value="ECO:0007669"/>
    <property type="project" value="UniProtKB-UniRule"/>
</dbReference>
<dbReference type="GO" id="GO:0043908">
    <property type="term" value="F:Ser(Gly)-tRNA(Ala) hydrolase activity"/>
    <property type="evidence" value="ECO:0007669"/>
    <property type="project" value="UniProtKB-UniRule"/>
</dbReference>
<dbReference type="GO" id="GO:0000049">
    <property type="term" value="F:tRNA binding"/>
    <property type="evidence" value="ECO:0007669"/>
    <property type="project" value="UniProtKB-UniRule"/>
</dbReference>
<dbReference type="GO" id="GO:0019478">
    <property type="term" value="P:D-amino acid catabolic process"/>
    <property type="evidence" value="ECO:0007669"/>
    <property type="project" value="UniProtKB-UniRule"/>
</dbReference>
<dbReference type="FunFam" id="3.50.80.10:FF:000001">
    <property type="entry name" value="D-aminoacyl-tRNA deacylase"/>
    <property type="match status" value="1"/>
</dbReference>
<dbReference type="Gene3D" id="3.50.80.10">
    <property type="entry name" value="D-tyrosyl-tRNA(Tyr) deacylase"/>
    <property type="match status" value="1"/>
</dbReference>
<dbReference type="HAMAP" id="MF_00518">
    <property type="entry name" value="Deacylase_Dtd"/>
    <property type="match status" value="1"/>
</dbReference>
<dbReference type="InterPro" id="IPR003732">
    <property type="entry name" value="Daa-tRNA_deacyls_DTD"/>
</dbReference>
<dbReference type="InterPro" id="IPR023509">
    <property type="entry name" value="DTD-like_sf"/>
</dbReference>
<dbReference type="NCBIfam" id="TIGR00256">
    <property type="entry name" value="D-aminoacyl-tRNA deacylase"/>
    <property type="match status" value="1"/>
</dbReference>
<dbReference type="PANTHER" id="PTHR10472:SF5">
    <property type="entry name" value="D-AMINOACYL-TRNA DEACYLASE 1"/>
    <property type="match status" value="1"/>
</dbReference>
<dbReference type="PANTHER" id="PTHR10472">
    <property type="entry name" value="D-TYROSYL-TRNA TYR DEACYLASE"/>
    <property type="match status" value="1"/>
</dbReference>
<dbReference type="Pfam" id="PF02580">
    <property type="entry name" value="Tyr_Deacylase"/>
    <property type="match status" value="1"/>
</dbReference>
<dbReference type="SUPFAM" id="SSF69500">
    <property type="entry name" value="DTD-like"/>
    <property type="match status" value="1"/>
</dbReference>
<accession>Q72C32</accession>
<evidence type="ECO:0000255" key="1">
    <source>
        <dbReference type="HAMAP-Rule" id="MF_00518"/>
    </source>
</evidence>
<sequence>MRLVVQRVLEAGVRVDDTPVATIGTGLLVLAGFGKDDDETLPDSRRWNAMCDKLIDLRIFPDAEGRMNRSLREHGGEVLLVSQFTLYADLRRGRRPSFQTAAPPDTARNLYERLVHDIDARLPGRVSSGIFGALMHVSLINWGPVTLCLDDAELFPEASVAG</sequence>
<protein>
    <recommendedName>
        <fullName evidence="1">D-aminoacyl-tRNA deacylase</fullName>
        <shortName evidence="1">DTD</shortName>
        <ecNumber evidence="1">3.1.1.96</ecNumber>
    </recommendedName>
    <alternativeName>
        <fullName evidence="1">Gly-tRNA(Ala) deacylase</fullName>
    </alternativeName>
</protein>
<organism>
    <name type="scientific">Nitratidesulfovibrio vulgaris (strain ATCC 29579 / DSM 644 / CCUG 34227 / NCIMB 8303 / VKM B-1760 / Hildenborough)</name>
    <name type="common">Desulfovibrio vulgaris</name>
    <dbReference type="NCBI Taxonomy" id="882"/>
    <lineage>
        <taxon>Bacteria</taxon>
        <taxon>Pseudomonadati</taxon>
        <taxon>Thermodesulfobacteriota</taxon>
        <taxon>Desulfovibrionia</taxon>
        <taxon>Desulfovibrionales</taxon>
        <taxon>Desulfovibrionaceae</taxon>
        <taxon>Nitratidesulfovibrio</taxon>
    </lineage>
</organism>
<keyword id="KW-0963">Cytoplasm</keyword>
<keyword id="KW-0378">Hydrolase</keyword>
<keyword id="KW-1185">Reference proteome</keyword>
<keyword id="KW-0694">RNA-binding</keyword>
<keyword id="KW-0820">tRNA-binding</keyword>
<reference key="1">
    <citation type="journal article" date="2004" name="Nat. Biotechnol.">
        <title>The genome sequence of the anaerobic, sulfate-reducing bacterium Desulfovibrio vulgaris Hildenborough.</title>
        <authorList>
            <person name="Heidelberg J.F."/>
            <person name="Seshadri R."/>
            <person name="Haveman S.A."/>
            <person name="Hemme C.L."/>
            <person name="Paulsen I.T."/>
            <person name="Kolonay J.F."/>
            <person name="Eisen J.A."/>
            <person name="Ward N.L."/>
            <person name="Methe B.A."/>
            <person name="Brinkac L.M."/>
            <person name="Daugherty S.C."/>
            <person name="DeBoy R.T."/>
            <person name="Dodson R.J."/>
            <person name="Durkin A.S."/>
            <person name="Madupu R."/>
            <person name="Nelson W.C."/>
            <person name="Sullivan S.A."/>
            <person name="Fouts D.E."/>
            <person name="Haft D.H."/>
            <person name="Selengut J."/>
            <person name="Peterson J.D."/>
            <person name="Davidsen T.M."/>
            <person name="Zafar N."/>
            <person name="Zhou L."/>
            <person name="Radune D."/>
            <person name="Dimitrov G."/>
            <person name="Hance M."/>
            <person name="Tran K."/>
            <person name="Khouri H.M."/>
            <person name="Gill J."/>
            <person name="Utterback T.R."/>
            <person name="Feldblyum T.V."/>
            <person name="Wall J.D."/>
            <person name="Voordouw G."/>
            <person name="Fraser C.M."/>
        </authorList>
    </citation>
    <scope>NUCLEOTIDE SEQUENCE [LARGE SCALE GENOMIC DNA]</scope>
    <source>
        <strain>ATCC 29579 / DSM 644 / CCUG 34227 / NCIMB 8303 / VKM B-1760 / Hildenborough</strain>
    </source>
</reference>
<name>DTD_NITV2</name>
<comment type="function">
    <text evidence="1">An aminoacyl-tRNA editing enzyme that deacylates mischarged D-aminoacyl-tRNAs. Also deacylates mischarged glycyl-tRNA(Ala), protecting cells against glycine mischarging by AlaRS. Acts via tRNA-based rather than protein-based catalysis; rejects L-amino acids rather than detecting D-amino acids in the active site. By recycling D-aminoacyl-tRNA to D-amino acids and free tRNA molecules, this enzyme counteracts the toxicity associated with the formation of D-aminoacyl-tRNA entities in vivo and helps enforce protein L-homochirality.</text>
</comment>
<comment type="catalytic activity">
    <reaction evidence="1">
        <text>glycyl-tRNA(Ala) + H2O = tRNA(Ala) + glycine + H(+)</text>
        <dbReference type="Rhea" id="RHEA:53744"/>
        <dbReference type="Rhea" id="RHEA-COMP:9657"/>
        <dbReference type="Rhea" id="RHEA-COMP:13640"/>
        <dbReference type="ChEBI" id="CHEBI:15377"/>
        <dbReference type="ChEBI" id="CHEBI:15378"/>
        <dbReference type="ChEBI" id="CHEBI:57305"/>
        <dbReference type="ChEBI" id="CHEBI:78442"/>
        <dbReference type="ChEBI" id="CHEBI:78522"/>
        <dbReference type="EC" id="3.1.1.96"/>
    </reaction>
</comment>
<comment type="catalytic activity">
    <reaction evidence="1">
        <text>a D-aminoacyl-tRNA + H2O = a tRNA + a D-alpha-amino acid + H(+)</text>
        <dbReference type="Rhea" id="RHEA:13953"/>
        <dbReference type="Rhea" id="RHEA-COMP:10123"/>
        <dbReference type="Rhea" id="RHEA-COMP:10124"/>
        <dbReference type="ChEBI" id="CHEBI:15377"/>
        <dbReference type="ChEBI" id="CHEBI:15378"/>
        <dbReference type="ChEBI" id="CHEBI:59871"/>
        <dbReference type="ChEBI" id="CHEBI:78442"/>
        <dbReference type="ChEBI" id="CHEBI:79333"/>
        <dbReference type="EC" id="3.1.1.96"/>
    </reaction>
</comment>
<comment type="subunit">
    <text evidence="1">Homodimer.</text>
</comment>
<comment type="subcellular location">
    <subcellularLocation>
        <location evidence="1">Cytoplasm</location>
    </subcellularLocation>
</comment>
<comment type="domain">
    <text evidence="1">A Gly-cisPro motif from one monomer fits into the active site of the other monomer to allow specific chiral rejection of L-amino acids.</text>
</comment>
<comment type="similarity">
    <text evidence="1">Belongs to the DTD family.</text>
</comment>
<proteinExistence type="inferred from homology"/>
<feature type="chain" id="PRO_1000127519" description="D-aminoacyl-tRNA deacylase">
    <location>
        <begin position="1"/>
        <end position="162"/>
    </location>
</feature>
<feature type="short sequence motif" description="Gly-cisPro motif, important for rejection of L-amino acids" evidence="1">
    <location>
        <begin position="143"/>
        <end position="144"/>
    </location>
</feature>
<gene>
    <name evidence="1" type="primary">dtd</name>
    <name type="ordered locus">DVU_1452</name>
</gene>